<protein>
    <recommendedName>
        <fullName evidence="1">dTTP/UTP pyrophosphatase</fullName>
        <shortName evidence="1">dTTPase/UTPase</shortName>
        <ecNumber evidence="1">3.6.1.9</ecNumber>
    </recommendedName>
    <alternativeName>
        <fullName evidence="1">Nucleoside triphosphate pyrophosphatase</fullName>
    </alternativeName>
    <alternativeName>
        <fullName evidence="1">Nucleotide pyrophosphatase</fullName>
        <shortName evidence="1">Nucleotide PPase</shortName>
    </alternativeName>
</protein>
<proteinExistence type="inferred from homology"/>
<name>NTPPA_BACAC</name>
<organism>
    <name type="scientific">Bacillus anthracis (strain CDC 684 / NRRL 3495)</name>
    <dbReference type="NCBI Taxonomy" id="568206"/>
    <lineage>
        <taxon>Bacteria</taxon>
        <taxon>Bacillati</taxon>
        <taxon>Bacillota</taxon>
        <taxon>Bacilli</taxon>
        <taxon>Bacillales</taxon>
        <taxon>Bacillaceae</taxon>
        <taxon>Bacillus</taxon>
        <taxon>Bacillus cereus group</taxon>
    </lineage>
</organism>
<dbReference type="EC" id="3.6.1.9" evidence="1"/>
<dbReference type="EMBL" id="CP001215">
    <property type="protein sequence ID" value="ACP15722.1"/>
    <property type="molecule type" value="Genomic_DNA"/>
</dbReference>
<dbReference type="RefSeq" id="WP_001226274.1">
    <property type="nucleotide sequence ID" value="NC_012581.1"/>
</dbReference>
<dbReference type="SMR" id="C3L6Y6"/>
<dbReference type="KEGG" id="bah:BAMEG_4722"/>
<dbReference type="HOGENOM" id="CLU_040416_0_0_9"/>
<dbReference type="GO" id="GO:0005737">
    <property type="term" value="C:cytoplasm"/>
    <property type="evidence" value="ECO:0007669"/>
    <property type="project" value="UniProtKB-SubCell"/>
</dbReference>
<dbReference type="GO" id="GO:0036218">
    <property type="term" value="F:dTTP diphosphatase activity"/>
    <property type="evidence" value="ECO:0007669"/>
    <property type="project" value="RHEA"/>
</dbReference>
<dbReference type="GO" id="GO:0036221">
    <property type="term" value="F:UTP diphosphatase activity"/>
    <property type="evidence" value="ECO:0007669"/>
    <property type="project" value="RHEA"/>
</dbReference>
<dbReference type="GO" id="GO:0009117">
    <property type="term" value="P:nucleotide metabolic process"/>
    <property type="evidence" value="ECO:0007669"/>
    <property type="project" value="UniProtKB-KW"/>
</dbReference>
<dbReference type="CDD" id="cd00555">
    <property type="entry name" value="Maf"/>
    <property type="match status" value="1"/>
</dbReference>
<dbReference type="FunFam" id="3.90.950.10:FF:000007">
    <property type="entry name" value="dTTP/UTP pyrophosphatase"/>
    <property type="match status" value="1"/>
</dbReference>
<dbReference type="Gene3D" id="3.90.950.10">
    <property type="match status" value="1"/>
</dbReference>
<dbReference type="HAMAP" id="MF_00528">
    <property type="entry name" value="Maf"/>
    <property type="match status" value="1"/>
</dbReference>
<dbReference type="InterPro" id="IPR029001">
    <property type="entry name" value="ITPase-like_fam"/>
</dbReference>
<dbReference type="InterPro" id="IPR003697">
    <property type="entry name" value="Maf-like"/>
</dbReference>
<dbReference type="NCBIfam" id="TIGR00172">
    <property type="entry name" value="maf"/>
    <property type="match status" value="1"/>
</dbReference>
<dbReference type="PANTHER" id="PTHR43213">
    <property type="entry name" value="BIFUNCTIONAL DTTP/UTP PYROPHOSPHATASE/METHYLTRANSFERASE PROTEIN-RELATED"/>
    <property type="match status" value="1"/>
</dbReference>
<dbReference type="PANTHER" id="PTHR43213:SF5">
    <property type="entry name" value="BIFUNCTIONAL DTTP_UTP PYROPHOSPHATASE_METHYLTRANSFERASE PROTEIN-RELATED"/>
    <property type="match status" value="1"/>
</dbReference>
<dbReference type="Pfam" id="PF02545">
    <property type="entry name" value="Maf"/>
    <property type="match status" value="1"/>
</dbReference>
<dbReference type="PIRSF" id="PIRSF006305">
    <property type="entry name" value="Maf"/>
    <property type="match status" value="1"/>
</dbReference>
<dbReference type="SUPFAM" id="SSF52972">
    <property type="entry name" value="ITPase-like"/>
    <property type="match status" value="1"/>
</dbReference>
<feature type="chain" id="PRO_1000146280" description="dTTP/UTP pyrophosphatase">
    <location>
        <begin position="1"/>
        <end position="191"/>
    </location>
</feature>
<feature type="active site" description="Proton acceptor" evidence="1">
    <location>
        <position position="69"/>
    </location>
</feature>
<feature type="site" description="Important for substrate specificity" evidence="1">
    <location>
        <position position="12"/>
    </location>
</feature>
<feature type="site" description="Important for substrate specificity" evidence="1">
    <location>
        <position position="70"/>
    </location>
</feature>
<feature type="site" description="Important for substrate specificity" evidence="1">
    <location>
        <position position="152"/>
    </location>
</feature>
<keyword id="KW-0963">Cytoplasm</keyword>
<keyword id="KW-0378">Hydrolase</keyword>
<keyword id="KW-0546">Nucleotide metabolism</keyword>
<reference key="1">
    <citation type="submission" date="2008-10" db="EMBL/GenBank/DDBJ databases">
        <title>Genome sequence of Bacillus anthracis str. CDC 684.</title>
        <authorList>
            <person name="Dodson R.J."/>
            <person name="Munk A.C."/>
            <person name="Brettin T."/>
            <person name="Bruce D."/>
            <person name="Detter C."/>
            <person name="Tapia R."/>
            <person name="Han C."/>
            <person name="Sutton G."/>
            <person name="Sims D."/>
        </authorList>
    </citation>
    <scope>NUCLEOTIDE SEQUENCE [LARGE SCALE GENOMIC DNA]</scope>
    <source>
        <strain>CDC 684 / NRRL 3495</strain>
    </source>
</reference>
<sequence>MRKIILASGSPRRKELLELAGVPFEIIVSEVEETIGAYSSPSDIVMSLALQKASAVAENNSDHIVLGADTIVTYESRILGKPSNKAEAKEMLQLLSGKTHEVYTGVAIIAKDKTVTFYERTEVTFWELTEEEIDAYVASKEPLDKAGSYGIQGKGSIFVQHIQGDYYSVVGLPISRLVRELKQFNIDVTHA</sequence>
<comment type="function">
    <text evidence="1">Nucleoside triphosphate pyrophosphatase that hydrolyzes dTTP and UTP. May have a dual role in cell division arrest and in preventing the incorporation of modified nucleotides into cellular nucleic acids.</text>
</comment>
<comment type="catalytic activity">
    <reaction evidence="1">
        <text>dTTP + H2O = dTMP + diphosphate + H(+)</text>
        <dbReference type="Rhea" id="RHEA:28534"/>
        <dbReference type="ChEBI" id="CHEBI:15377"/>
        <dbReference type="ChEBI" id="CHEBI:15378"/>
        <dbReference type="ChEBI" id="CHEBI:33019"/>
        <dbReference type="ChEBI" id="CHEBI:37568"/>
        <dbReference type="ChEBI" id="CHEBI:63528"/>
        <dbReference type="EC" id="3.6.1.9"/>
    </reaction>
</comment>
<comment type="catalytic activity">
    <reaction evidence="1">
        <text>UTP + H2O = UMP + diphosphate + H(+)</text>
        <dbReference type="Rhea" id="RHEA:29395"/>
        <dbReference type="ChEBI" id="CHEBI:15377"/>
        <dbReference type="ChEBI" id="CHEBI:15378"/>
        <dbReference type="ChEBI" id="CHEBI:33019"/>
        <dbReference type="ChEBI" id="CHEBI:46398"/>
        <dbReference type="ChEBI" id="CHEBI:57865"/>
        <dbReference type="EC" id="3.6.1.9"/>
    </reaction>
</comment>
<comment type="cofactor">
    <cofactor evidence="1">
        <name>a divalent metal cation</name>
        <dbReference type="ChEBI" id="CHEBI:60240"/>
    </cofactor>
</comment>
<comment type="subcellular location">
    <subcellularLocation>
        <location evidence="1">Cytoplasm</location>
    </subcellularLocation>
</comment>
<comment type="similarity">
    <text evidence="1">Belongs to the Maf family. YhdE subfamily.</text>
</comment>
<accession>C3L6Y6</accession>
<evidence type="ECO:0000255" key="1">
    <source>
        <dbReference type="HAMAP-Rule" id="MF_00528"/>
    </source>
</evidence>
<gene>
    <name type="primary">maf</name>
    <name type="ordered locus">BAMEG_4722</name>
</gene>